<sequence length="171" mass="19893">MLFIICLVFISCNVLREVKYQETWCFPAYGMVIGLWLMLSSIPQRRLVLNHTRGMYHFSIQGRTVCQGPMHLVYVRLALSSDAYGGRFFQLVLCGHKLEPLVLVQLSERYEQMEFLGRHLARKLNINYFDYLASSYRHVVRHWPLGASFSPGIVQRKTQVYTKSSVNDLDV</sequence>
<reference evidence="6" key="1">
    <citation type="journal article" date="2009" name="PLoS Biol.">
        <title>Lineage-specific biology revealed by a finished genome assembly of the mouse.</title>
        <authorList>
            <person name="Church D.M."/>
            <person name="Goodstadt L."/>
            <person name="Hillier L.W."/>
            <person name="Zody M.C."/>
            <person name="Goldstein S."/>
            <person name="She X."/>
            <person name="Bult C.J."/>
            <person name="Agarwala R."/>
            <person name="Cherry J.L."/>
            <person name="DiCuccio M."/>
            <person name="Hlavina W."/>
            <person name="Kapustin Y."/>
            <person name="Meric P."/>
            <person name="Maglott D."/>
            <person name="Birtle Z."/>
            <person name="Marques A.C."/>
            <person name="Graves T."/>
            <person name="Zhou S."/>
            <person name="Teague B."/>
            <person name="Potamousis K."/>
            <person name="Churas C."/>
            <person name="Place M."/>
            <person name="Herschleb J."/>
            <person name="Runnheim R."/>
            <person name="Forrest D."/>
            <person name="Amos-Landgraf J."/>
            <person name="Schwartz D.C."/>
            <person name="Cheng Z."/>
            <person name="Lindblad-Toh K."/>
            <person name="Eichler E.E."/>
            <person name="Ponting C.P."/>
        </authorList>
    </citation>
    <scope>NUCLEOTIDE SEQUENCE [LARGE SCALE GENOMIC DNA]</scope>
    <source>
        <strain evidence="6">C57BL/6J</strain>
    </source>
</reference>
<reference evidence="4" key="2">
    <citation type="journal article" date="2021" name="Nature">
        <title>Structure of a mammalian sperm cation channel complex.</title>
        <authorList>
            <person name="Lin S."/>
            <person name="Ke M."/>
            <person name="Zhang Y."/>
            <person name="Yan Z."/>
            <person name="Wu J."/>
        </authorList>
    </citation>
    <scope>STRUCTURE BY ELECTRON MICROSCOPY (2.9 ANGSTROMS) OF THE CATSPER COMPLEX</scope>
    <scope>IDENTIFICATION BY MASS SPECTROMETRY</scope>
    <scope>FUNCTION</scope>
    <scope>SUBCELLULAR LOCATION</scope>
    <scope>TRANSMEMBRANE DOMAINS</scope>
    <scope>TOPOLOGY</scope>
</reference>
<evidence type="ECO:0000250" key="1">
    <source>
        <dbReference type="UniProtKB" id="Q91ZR5"/>
    </source>
</evidence>
<evidence type="ECO:0000255" key="2"/>
<evidence type="ECO:0000269" key="3">
    <source>
    </source>
</evidence>
<evidence type="ECO:0000305" key="4"/>
<evidence type="ECO:0000312" key="5">
    <source>
        <dbReference type="MGI" id="MGI:3647471"/>
    </source>
</evidence>
<evidence type="ECO:0000312" key="6">
    <source>
        <dbReference type="Proteomes" id="UP000000589"/>
    </source>
</evidence>
<evidence type="ECO:0007829" key="7">
    <source>
        <dbReference type="PDB" id="7EEB"/>
    </source>
</evidence>
<dbReference type="RefSeq" id="NP_001365176.1">
    <property type="nucleotide sequence ID" value="NM_001378247.1"/>
</dbReference>
<dbReference type="PDB" id="7EEB">
    <property type="method" value="EM"/>
    <property type="resolution" value="2.90 A"/>
    <property type="chains" value="J=1-171"/>
</dbReference>
<dbReference type="PDBsum" id="7EEB"/>
<dbReference type="EMDB" id="EMD-31076"/>
<dbReference type="SMR" id="A0A2R8VHF7"/>
<dbReference type="ComplexPortal" id="CPX-9078">
    <property type="entry name" value="CatSpermasome complex, gamma subunit variant 2"/>
</dbReference>
<dbReference type="FunCoup" id="A0A2R8VHF7">
    <property type="interactions" value="13"/>
</dbReference>
<dbReference type="STRING" id="10090.ENSMUSP00000155040"/>
<dbReference type="Antibodypedia" id="72998">
    <property type="antibodies" value="4 antibodies from 3 providers"/>
</dbReference>
<dbReference type="Ensembl" id="ENSMUST00000230604.2">
    <property type="protein sequence ID" value="ENSMUSP00000155040.2"/>
    <property type="gene ID" value="ENSMUSG00000116376.3"/>
</dbReference>
<dbReference type="GeneID" id="666504"/>
<dbReference type="AGR" id="MGI:3647471"/>
<dbReference type="MGI" id="MGI:3647471">
    <property type="gene designation" value="Tmem249"/>
</dbReference>
<dbReference type="VEuPathDB" id="HostDB:ENSMUSG00000116376"/>
<dbReference type="GeneTree" id="ENSGT00510000050177"/>
<dbReference type="InParanoid" id="A0A2R8VHF7"/>
<dbReference type="OMA" id="IHNIYFR"/>
<dbReference type="OrthoDB" id="5519333at2759"/>
<dbReference type="PRO" id="PR:A0A2R8VHF7"/>
<dbReference type="Proteomes" id="UP000000589">
    <property type="component" value="Chromosome 15"/>
</dbReference>
<dbReference type="Bgee" id="ENSMUSG00000116376">
    <property type="expression patterns" value="Expressed in spermatid and 21 other cell types or tissues"/>
</dbReference>
<dbReference type="GO" id="GO:0036128">
    <property type="term" value="C:CatSper complex"/>
    <property type="evidence" value="ECO:0000314"/>
    <property type="project" value="UniProtKB"/>
</dbReference>
<dbReference type="GO" id="GO:0097228">
    <property type="term" value="C:sperm principal piece"/>
    <property type="evidence" value="ECO:0000314"/>
    <property type="project" value="UniProtKB"/>
</dbReference>
<dbReference type="InterPro" id="IPR027861">
    <property type="entry name" value="TMEM249"/>
</dbReference>
<dbReference type="PANTHER" id="PTHR35442:SF1">
    <property type="entry name" value="CATION CHANNEL SPERM-ASSOCIATED AUXILIARY SUBUNIT TMEM249"/>
    <property type="match status" value="1"/>
</dbReference>
<dbReference type="PANTHER" id="PTHR35442">
    <property type="entry name" value="TRANSMEMBRANE PROTEIN 249"/>
    <property type="match status" value="1"/>
</dbReference>
<dbReference type="Pfam" id="PF15158">
    <property type="entry name" value="TMEM249"/>
    <property type="match status" value="1"/>
</dbReference>
<feature type="chain" id="PRO_5015341210" description="Cation channel sperm-associated auxiliary subunit TMEM249" evidence="2">
    <location>
        <begin position="1"/>
        <end position="171"/>
    </location>
</feature>
<feature type="topological domain" description="Cytoplasmic" evidence="3">
    <location>
        <begin position="1"/>
        <end position="2"/>
    </location>
</feature>
<feature type="transmembrane region" description="Helical" evidence="3">
    <location>
        <begin position="3"/>
        <end position="17"/>
    </location>
</feature>
<feature type="topological domain" description="Extracellular" evidence="3">
    <location>
        <begin position="18"/>
        <end position="28"/>
    </location>
</feature>
<feature type="transmembrane region" description="Helical" evidence="3">
    <location>
        <begin position="29"/>
        <end position="40"/>
    </location>
</feature>
<feature type="topological domain" description="Cytoplasmic" evidence="3">
    <location>
        <begin position="41"/>
        <end position="171"/>
    </location>
</feature>
<feature type="helix" evidence="7">
    <location>
        <begin position="2"/>
        <end position="16"/>
    </location>
</feature>
<feature type="helix" evidence="7">
    <location>
        <begin position="30"/>
        <end position="40"/>
    </location>
</feature>
<feature type="strand" evidence="7">
    <location>
        <begin position="48"/>
        <end position="50"/>
    </location>
</feature>
<feature type="turn" evidence="7">
    <location>
        <begin position="51"/>
        <end position="54"/>
    </location>
</feature>
<feature type="strand" evidence="7">
    <location>
        <begin position="55"/>
        <end position="60"/>
    </location>
</feature>
<feature type="strand" evidence="7">
    <location>
        <begin position="63"/>
        <end position="69"/>
    </location>
</feature>
<feature type="strand" evidence="7">
    <location>
        <begin position="78"/>
        <end position="81"/>
    </location>
</feature>
<feature type="strand" evidence="7">
    <location>
        <begin position="83"/>
        <end position="85"/>
    </location>
</feature>
<feature type="strand" evidence="7">
    <location>
        <begin position="87"/>
        <end position="90"/>
    </location>
</feature>
<feature type="helix" evidence="7">
    <location>
        <begin position="111"/>
        <end position="123"/>
    </location>
</feature>
<feature type="helix" evidence="7">
    <location>
        <begin position="129"/>
        <end position="132"/>
    </location>
</feature>
<feature type="strand" evidence="7">
    <location>
        <begin position="135"/>
        <end position="137"/>
    </location>
</feature>
<feature type="helix" evidence="7">
    <location>
        <begin position="150"/>
        <end position="159"/>
    </location>
</feature>
<keyword id="KW-0002">3D-structure</keyword>
<keyword id="KW-1003">Cell membrane</keyword>
<keyword id="KW-0966">Cell projection</keyword>
<keyword id="KW-0969">Cilium</keyword>
<keyword id="KW-0282">Flagellum</keyword>
<keyword id="KW-0472">Membrane</keyword>
<keyword id="KW-1185">Reference proteome</keyword>
<keyword id="KW-0812">Transmembrane</keyword>
<keyword id="KW-1133">Transmembrane helix</keyword>
<protein>
    <recommendedName>
        <fullName evidence="4">Cation channel sperm-associated auxiliary subunit TMEM249</fullName>
    </recommendedName>
    <alternativeName>
        <fullName evidence="5">Transmembrane protein 249</fullName>
    </alternativeName>
</protein>
<proteinExistence type="evidence at protein level"/>
<accession>A0A2R8VHF7</accession>
<organism evidence="6">
    <name type="scientific">Mus musculus</name>
    <name type="common">Mouse</name>
    <dbReference type="NCBI Taxonomy" id="10090"/>
    <lineage>
        <taxon>Eukaryota</taxon>
        <taxon>Metazoa</taxon>
        <taxon>Chordata</taxon>
        <taxon>Craniata</taxon>
        <taxon>Vertebrata</taxon>
        <taxon>Euteleostomi</taxon>
        <taxon>Mammalia</taxon>
        <taxon>Eutheria</taxon>
        <taxon>Euarchontoglires</taxon>
        <taxon>Glires</taxon>
        <taxon>Rodentia</taxon>
        <taxon>Myomorpha</taxon>
        <taxon>Muroidea</taxon>
        <taxon>Muridae</taxon>
        <taxon>Murinae</taxon>
        <taxon>Mus</taxon>
        <taxon>Mus</taxon>
    </lineage>
</organism>
<comment type="function">
    <text evidence="3">Auxiliary component of the CatSper complex, a complex involved in sperm cell hyperactivation.</text>
</comment>
<comment type="subunit">
    <text evidence="1 3 4">Component of the CatSper complex or CatSpermasome composed of the core pore-forming members CATSPER1, CATSPER2, CATSPER3 and CATSPER4 as well as auxiliary members CATSPERB, CATSPERG2, CATSPERD, CATSPERE, CATSPERZ, C2CD6/CATSPERT, SLCO6C1, TMEM249, TMEM262 and EFCAB9 (PubMed:34225353). HSPA1 may be an additional auxiliary complex member (By similarity). The core complex members CATSPER1, CATSPER2, CATSPER3 and CATSPER4 form a heterotetrameric channel (PubMed:34225353). The auxiliary CATSPERB, CATSPERG2, CATSPERD and CATSPERE subunits form a pavilion-like structure over the pore which stabilizes the complex through interactions with CATSPER4, CATSPER3, CATSPER1 and CATSPER2 respectively (PubMed:34225353). SLCO6C1 interacts with CATSPERE and TMEM262/CATSPERH interacts with CATSPERB, further stabilizing the complex (PubMed:34225353). C2CD6/CATSPERT interacts at least with CATSPERD and is required for targeting the CatSper complex in the flagellar membrane (Probable).</text>
</comment>
<comment type="subcellular location">
    <subcellularLocation>
        <location evidence="3">Cell projection</location>
        <location evidence="3">Cilium</location>
        <location evidence="3">Flagellum membrane</location>
        <topology evidence="3">Multi-pass membrane protein</topology>
    </subcellularLocation>
    <text evidence="3">Predominantly located in the principal piece of the sperm tail.</text>
</comment>
<name>TM249_MOUSE</name>
<gene>
    <name evidence="5" type="primary">Tmem249</name>
</gene>